<proteinExistence type="inferred from homology"/>
<accession>Q474L4</accession>
<feature type="chain" id="PRO_0000230886" description="Transcriptional repressor NrdR">
    <location>
        <begin position="1"/>
        <end position="154"/>
    </location>
</feature>
<feature type="domain" description="ATP-cone" evidence="1">
    <location>
        <begin position="49"/>
        <end position="139"/>
    </location>
</feature>
<feature type="zinc finger region" evidence="1">
    <location>
        <begin position="3"/>
        <end position="34"/>
    </location>
</feature>
<dbReference type="EMBL" id="CP000090">
    <property type="protein sequence ID" value="AAZ60169.1"/>
    <property type="molecule type" value="Genomic_DNA"/>
</dbReference>
<dbReference type="SMR" id="Q474L4"/>
<dbReference type="STRING" id="264198.Reut_A0789"/>
<dbReference type="KEGG" id="reu:Reut_A0789"/>
<dbReference type="eggNOG" id="COG1327">
    <property type="taxonomic scope" value="Bacteria"/>
</dbReference>
<dbReference type="HOGENOM" id="CLU_108412_0_0_4"/>
<dbReference type="OrthoDB" id="9807461at2"/>
<dbReference type="GO" id="GO:0005524">
    <property type="term" value="F:ATP binding"/>
    <property type="evidence" value="ECO:0007669"/>
    <property type="project" value="UniProtKB-KW"/>
</dbReference>
<dbReference type="GO" id="GO:0003677">
    <property type="term" value="F:DNA binding"/>
    <property type="evidence" value="ECO:0007669"/>
    <property type="project" value="UniProtKB-KW"/>
</dbReference>
<dbReference type="GO" id="GO:0008270">
    <property type="term" value="F:zinc ion binding"/>
    <property type="evidence" value="ECO:0007669"/>
    <property type="project" value="UniProtKB-UniRule"/>
</dbReference>
<dbReference type="GO" id="GO:0045892">
    <property type="term" value="P:negative regulation of DNA-templated transcription"/>
    <property type="evidence" value="ECO:0007669"/>
    <property type="project" value="UniProtKB-UniRule"/>
</dbReference>
<dbReference type="HAMAP" id="MF_00440">
    <property type="entry name" value="NrdR"/>
    <property type="match status" value="1"/>
</dbReference>
<dbReference type="InterPro" id="IPR005144">
    <property type="entry name" value="ATP-cone_dom"/>
</dbReference>
<dbReference type="InterPro" id="IPR055173">
    <property type="entry name" value="NrdR-like_N"/>
</dbReference>
<dbReference type="InterPro" id="IPR003796">
    <property type="entry name" value="RNR_NrdR-like"/>
</dbReference>
<dbReference type="NCBIfam" id="TIGR00244">
    <property type="entry name" value="transcriptional regulator NrdR"/>
    <property type="match status" value="1"/>
</dbReference>
<dbReference type="PANTHER" id="PTHR30455">
    <property type="entry name" value="TRANSCRIPTIONAL REPRESSOR NRDR"/>
    <property type="match status" value="1"/>
</dbReference>
<dbReference type="PANTHER" id="PTHR30455:SF2">
    <property type="entry name" value="TRANSCRIPTIONAL REPRESSOR NRDR"/>
    <property type="match status" value="1"/>
</dbReference>
<dbReference type="Pfam" id="PF03477">
    <property type="entry name" value="ATP-cone"/>
    <property type="match status" value="1"/>
</dbReference>
<dbReference type="Pfam" id="PF22811">
    <property type="entry name" value="Zn_ribbon_NrdR"/>
    <property type="match status" value="1"/>
</dbReference>
<dbReference type="PROSITE" id="PS51161">
    <property type="entry name" value="ATP_CONE"/>
    <property type="match status" value="1"/>
</dbReference>
<name>NRDR_CUPPJ</name>
<sequence>MKCPFCGHSNTQVLDTRMSEDGDAVRRRRRCEACDRRFTTYERIELFFPAIVKKNGSRVDYSRAKLKDSMRLALRKRPVSAEAIDEAITRIEEKLLALGQKEIPSSQVGELVMRELRKLDKIAYIRFASVYRSFEDVAEFSDVLAEVTSGNSKR</sequence>
<protein>
    <recommendedName>
        <fullName evidence="1">Transcriptional repressor NrdR</fullName>
    </recommendedName>
</protein>
<gene>
    <name evidence="1" type="primary">nrdR</name>
    <name type="ordered locus">Reut_A0789</name>
</gene>
<keyword id="KW-0067">ATP-binding</keyword>
<keyword id="KW-0238">DNA-binding</keyword>
<keyword id="KW-0479">Metal-binding</keyword>
<keyword id="KW-0547">Nucleotide-binding</keyword>
<keyword id="KW-0678">Repressor</keyword>
<keyword id="KW-0804">Transcription</keyword>
<keyword id="KW-0805">Transcription regulation</keyword>
<keyword id="KW-0862">Zinc</keyword>
<keyword id="KW-0863">Zinc-finger</keyword>
<comment type="function">
    <text evidence="1">Negatively regulates transcription of bacterial ribonucleotide reductase nrd genes and operons by binding to NrdR-boxes.</text>
</comment>
<comment type="cofactor">
    <cofactor evidence="1">
        <name>Zn(2+)</name>
        <dbReference type="ChEBI" id="CHEBI:29105"/>
    </cofactor>
    <text evidence="1">Binds 1 zinc ion.</text>
</comment>
<comment type="similarity">
    <text evidence="1">Belongs to the NrdR family.</text>
</comment>
<evidence type="ECO:0000255" key="1">
    <source>
        <dbReference type="HAMAP-Rule" id="MF_00440"/>
    </source>
</evidence>
<organism>
    <name type="scientific">Cupriavidus pinatubonensis (strain JMP 134 / LMG 1197)</name>
    <name type="common">Cupriavidus necator (strain JMP 134)</name>
    <dbReference type="NCBI Taxonomy" id="264198"/>
    <lineage>
        <taxon>Bacteria</taxon>
        <taxon>Pseudomonadati</taxon>
        <taxon>Pseudomonadota</taxon>
        <taxon>Betaproteobacteria</taxon>
        <taxon>Burkholderiales</taxon>
        <taxon>Burkholderiaceae</taxon>
        <taxon>Cupriavidus</taxon>
    </lineage>
</organism>
<reference key="1">
    <citation type="journal article" date="2010" name="PLoS ONE">
        <title>The complete multipartite genome sequence of Cupriavidus necator JMP134, a versatile pollutant degrader.</title>
        <authorList>
            <person name="Lykidis A."/>
            <person name="Perez-Pantoja D."/>
            <person name="Ledger T."/>
            <person name="Mavromatis K."/>
            <person name="Anderson I.J."/>
            <person name="Ivanova N.N."/>
            <person name="Hooper S.D."/>
            <person name="Lapidus A."/>
            <person name="Lucas S."/>
            <person name="Gonzalez B."/>
            <person name="Kyrpides N.C."/>
        </authorList>
    </citation>
    <scope>NUCLEOTIDE SEQUENCE [LARGE SCALE GENOMIC DNA]</scope>
    <source>
        <strain>JMP134 / LMG 1197</strain>
    </source>
</reference>